<reference key="1">
    <citation type="journal article" date="2003" name="Development">
        <title>Incomplete reactivation of Oct4-related genes in mouse embryos cloned from somatic nuclei.</title>
        <authorList>
            <person name="Bortvin A."/>
            <person name="Eggan K."/>
            <person name="Skaletsky H."/>
            <person name="Akutsu H."/>
            <person name="Berry D.L."/>
            <person name="Yanagimachi R."/>
            <person name="Page D.C."/>
            <person name="Jaenisch R."/>
        </authorList>
    </citation>
    <scope>NUCLEOTIDE SEQUENCE [MRNA]</scope>
    <scope>TISSUE SPECIFICITY</scope>
    <scope>DEVELOPMENTAL STAGE</scope>
</reference>
<reference key="2">
    <citation type="journal article" date="2009" name="PLoS Biol.">
        <title>Lineage-specific biology revealed by a finished genome assembly of the mouse.</title>
        <authorList>
            <person name="Church D.M."/>
            <person name="Goodstadt L."/>
            <person name="Hillier L.W."/>
            <person name="Zody M.C."/>
            <person name="Goldstein S."/>
            <person name="She X."/>
            <person name="Bult C.J."/>
            <person name="Agarwala R."/>
            <person name="Cherry J.L."/>
            <person name="DiCuccio M."/>
            <person name="Hlavina W."/>
            <person name="Kapustin Y."/>
            <person name="Meric P."/>
            <person name="Maglott D."/>
            <person name="Birtle Z."/>
            <person name="Marques A.C."/>
            <person name="Graves T."/>
            <person name="Zhou S."/>
            <person name="Teague B."/>
            <person name="Potamousis K."/>
            <person name="Churas C."/>
            <person name="Place M."/>
            <person name="Herschleb J."/>
            <person name="Runnheim R."/>
            <person name="Forrest D."/>
            <person name="Amos-Landgraf J."/>
            <person name="Schwartz D.C."/>
            <person name="Cheng Z."/>
            <person name="Lindblad-Toh K."/>
            <person name="Eichler E.E."/>
            <person name="Ponting C.P."/>
        </authorList>
    </citation>
    <scope>NUCLEOTIDE SEQUENCE [LARGE SCALE GENOMIC DNA]</scope>
    <source>
        <strain evidence="8">C57BL/6J</strain>
    </source>
</reference>
<reference key="3">
    <citation type="journal article" date="2004" name="Genome Res.">
        <title>The status, quality, and expansion of the NIH full-length cDNA project: the Mammalian Gene Collection (MGC).</title>
        <authorList>
            <consortium name="The MGC Project Team"/>
        </authorList>
    </citation>
    <scope>NUCLEOTIDE SEQUENCE [LARGE SCALE MRNA] OF 2-479</scope>
    <source>
        <strain evidence="6">C57BL/6J</strain>
        <tissue evidence="6">Blastocyst</tissue>
    </source>
</reference>
<reference key="4">
    <citation type="journal article" date="2011" name="Stem Cells">
        <title>Pramel7 mediates LIF/STAT3-dependent self-renewal in embryonic stem cells.</title>
        <authorList>
            <person name="Casanova E.A."/>
            <person name="Shakhova O."/>
            <person name="Patel S.S."/>
            <person name="Asner I.N."/>
            <person name="Pelczar P."/>
            <person name="Weber F.A."/>
            <person name="Graf U."/>
            <person name="Sommer L."/>
            <person name="Buerki K."/>
            <person name="Cinelli P."/>
        </authorList>
    </citation>
    <scope>FUNCTION</scope>
    <scope>DEVELOPMENTAL STAGE</scope>
</reference>
<reference key="5">
    <citation type="journal article" date="2017" name="Nat. Cell Biol.">
        <title>Pramel7 mediates ground-state pluripotency through proteasomal-epigenetic combined pathways.</title>
        <authorList>
            <person name="Graf U."/>
            <person name="Casanova E.A."/>
            <person name="Wyck S."/>
            <person name="Dalcher D."/>
            <person name="Gatti M."/>
            <person name="Vollenweider E."/>
            <person name="Okoniewski M.J."/>
            <person name="Weber F.A."/>
            <person name="Patel S.S."/>
            <person name="Schmid M.W."/>
            <person name="Li J."/>
            <person name="Sharif J."/>
            <person name="Wanner G.A."/>
            <person name="Koseki H."/>
            <person name="Wong J."/>
            <person name="Pelczar P."/>
            <person name="Penengo L."/>
            <person name="Santoro R."/>
            <person name="Cinelli P."/>
        </authorList>
    </citation>
    <scope>FUNCTION</scope>
    <scope>INTERACTION WITH UHRF1</scope>
    <scope>DISRUPTION PHENOTYPE</scope>
</reference>
<proteinExistence type="evidence at protein level"/>
<organism>
    <name type="scientific">Mus musculus</name>
    <name type="common">Mouse</name>
    <dbReference type="NCBI Taxonomy" id="10090"/>
    <lineage>
        <taxon>Eukaryota</taxon>
        <taxon>Metazoa</taxon>
        <taxon>Chordata</taxon>
        <taxon>Craniata</taxon>
        <taxon>Vertebrata</taxon>
        <taxon>Euteleostomi</taxon>
        <taxon>Mammalia</taxon>
        <taxon>Eutheria</taxon>
        <taxon>Euarchontoglires</taxon>
        <taxon>Glires</taxon>
        <taxon>Rodentia</taxon>
        <taxon>Myomorpha</taxon>
        <taxon>Muroidea</taxon>
        <taxon>Muridae</taxon>
        <taxon>Murinae</taxon>
        <taxon>Mus</taxon>
        <taxon>Mus</taxon>
    </lineage>
</organism>
<accession>Q810Y8</accession>
<accession>Q7TPY5</accession>
<comment type="function">
    <text evidence="3 4">Promotes maintenance and self-renewal of pluripotent embryonic stem cells (ESCs), downstream of LIF/STAT3 (PubMed:21425410). Maintains the pluripotency state of ESCs by repressing DNA methylation through the regulation of UHRF1 stability. Mediates the proteasomal degradation of UHRF1. Is required for the establishment of the blastocyst (PubMed:28604677).</text>
</comment>
<comment type="subunit">
    <text evidence="4">Interacts with UHRF1.</text>
</comment>
<comment type="tissue specificity">
    <text evidence="2">Seems to be specific to pluripotent tissues in the early embryo. Not detected in somatic tissues.</text>
</comment>
<comment type="developmental stage">
    <text evidence="2 3">Expressed in early embryos at the 4-cell, blastocyst (3.5 dpc) and epiblast (7 dpc) stages (PubMed:12620990, PubMed:21425410). Expression is restricted to the interior part of the morula and the inner cell mass (ICM) of the blastocyst (PubMed:21425410). Detected in primordial germ cells (at 10 dpc) and undifferentiated embryonic stem cells (PubMed:12620990, PubMed:21425410).</text>
</comment>
<comment type="disruption phenotype">
    <text evidence="4">Embryonic lethality due to a developmental arrest during the establishment of the blastocyst.</text>
</comment>
<comment type="similarity">
    <text evidence="5">Belongs to the PRAME family.</text>
</comment>
<comment type="sequence caution" evidence="5">
    <conflict type="frameshift">
        <sequence resource="EMBL-CDS" id="AAH52825"/>
    </conflict>
</comment>
<comment type="sequence caution" evidence="5">
    <conflict type="miscellaneous discrepancy">
        <sequence resource="EMBL-CDS" id="AAH52825"/>
    </conflict>
    <text>Sequence of unknown origin in the N-terminal part.</text>
</comment>
<gene>
    <name evidence="7" type="primary">Pramel7</name>
</gene>
<dbReference type="EMBL" id="AF490343">
    <property type="protein sequence ID" value="AAO84501.1"/>
    <property type="molecule type" value="mRNA"/>
</dbReference>
<dbReference type="EMBL" id="AL928797">
    <property type="status" value="NOT_ANNOTATED_CDS"/>
    <property type="molecule type" value="Genomic_DNA"/>
</dbReference>
<dbReference type="EMBL" id="BC052825">
    <property type="protein sequence ID" value="AAH52825.1"/>
    <property type="status" value="ALT_SEQ"/>
    <property type="molecule type" value="mRNA"/>
</dbReference>
<dbReference type="CCDS" id="CCDS16293.1"/>
<dbReference type="RefSeq" id="NP_839981.1">
    <property type="nucleotide sequence ID" value="NM_178250.2"/>
</dbReference>
<dbReference type="SMR" id="Q810Y8"/>
<dbReference type="FunCoup" id="Q810Y8">
    <property type="interactions" value="464"/>
</dbReference>
<dbReference type="STRING" id="10090.ENSMUSP00000026957"/>
<dbReference type="iPTMnet" id="Q810Y8"/>
<dbReference type="PhosphoSitePlus" id="Q810Y8"/>
<dbReference type="PaxDb" id="10090-ENSMUSP00000026957"/>
<dbReference type="ProteomicsDB" id="291550"/>
<dbReference type="DNASU" id="347712"/>
<dbReference type="Ensembl" id="ENSMUST00000026957.4">
    <property type="protein sequence ID" value="ENSMUSP00000026957.4"/>
    <property type="gene ID" value="ENSMUSG00000025839.4"/>
</dbReference>
<dbReference type="GeneID" id="347712"/>
<dbReference type="KEGG" id="mmu:347712"/>
<dbReference type="UCSC" id="uc008koa.1">
    <property type="organism name" value="mouse"/>
</dbReference>
<dbReference type="AGR" id="MGI:2156391"/>
<dbReference type="CTD" id="347712"/>
<dbReference type="MGI" id="MGI:2156391">
    <property type="gene designation" value="Pramel7"/>
</dbReference>
<dbReference type="VEuPathDB" id="HostDB:ENSMUSG00000025839"/>
<dbReference type="eggNOG" id="ENOG502QWSJ">
    <property type="taxonomic scope" value="Eukaryota"/>
</dbReference>
<dbReference type="GeneTree" id="ENSGT01030000234531"/>
<dbReference type="HOGENOM" id="CLU_039635_2_1_1"/>
<dbReference type="InParanoid" id="Q810Y8"/>
<dbReference type="OMA" id="TTEMYPA"/>
<dbReference type="OrthoDB" id="9603336at2759"/>
<dbReference type="PhylomeDB" id="Q810Y8"/>
<dbReference type="TreeFam" id="TF332708"/>
<dbReference type="BioGRID-ORCS" id="347712">
    <property type="hits" value="1 hit in 77 CRISPR screens"/>
</dbReference>
<dbReference type="ChiTaRS" id="Pramel7">
    <property type="organism name" value="mouse"/>
</dbReference>
<dbReference type="PRO" id="PR:Q810Y8"/>
<dbReference type="Proteomes" id="UP000000589">
    <property type="component" value="Chromosome 2"/>
</dbReference>
<dbReference type="RNAct" id="Q810Y8">
    <property type="molecule type" value="protein"/>
</dbReference>
<dbReference type="Bgee" id="ENSMUSG00000025839">
    <property type="expression patterns" value="Expressed in cleaving embryo and 7 other cell types or tissues"/>
</dbReference>
<dbReference type="GO" id="GO:0001825">
    <property type="term" value="P:blastocyst formation"/>
    <property type="evidence" value="ECO:0000315"/>
    <property type="project" value="UniProtKB"/>
</dbReference>
<dbReference type="GO" id="GO:0043066">
    <property type="term" value="P:negative regulation of apoptotic process"/>
    <property type="evidence" value="ECO:0007669"/>
    <property type="project" value="InterPro"/>
</dbReference>
<dbReference type="GO" id="GO:0045596">
    <property type="term" value="P:negative regulation of cell differentiation"/>
    <property type="evidence" value="ECO:0007669"/>
    <property type="project" value="InterPro"/>
</dbReference>
<dbReference type="GO" id="GO:0045892">
    <property type="term" value="P:negative regulation of DNA-templated transcription"/>
    <property type="evidence" value="ECO:0007669"/>
    <property type="project" value="InterPro"/>
</dbReference>
<dbReference type="GO" id="GO:0008284">
    <property type="term" value="P:positive regulation of cell population proliferation"/>
    <property type="evidence" value="ECO:0007669"/>
    <property type="project" value="InterPro"/>
</dbReference>
<dbReference type="GO" id="GO:0070372">
    <property type="term" value="P:regulation of ERK1 and ERK2 cascade"/>
    <property type="evidence" value="ECO:0000314"/>
    <property type="project" value="MGI"/>
</dbReference>
<dbReference type="GO" id="GO:0035019">
    <property type="term" value="P:somatic stem cell population maintenance"/>
    <property type="evidence" value="ECO:0000314"/>
    <property type="project" value="MGI"/>
</dbReference>
<dbReference type="GO" id="GO:0019827">
    <property type="term" value="P:stem cell population maintenance"/>
    <property type="evidence" value="ECO:0000314"/>
    <property type="project" value="UniProtKB"/>
</dbReference>
<dbReference type="FunFam" id="3.80.10.10:FF:000079">
    <property type="entry name" value="PRAME family member 18"/>
    <property type="match status" value="1"/>
</dbReference>
<dbReference type="Gene3D" id="3.80.10.10">
    <property type="entry name" value="Ribonuclease Inhibitor"/>
    <property type="match status" value="1"/>
</dbReference>
<dbReference type="InterPro" id="IPR032675">
    <property type="entry name" value="LRR_dom_sf"/>
</dbReference>
<dbReference type="InterPro" id="IPR026271">
    <property type="entry name" value="PRAME"/>
</dbReference>
<dbReference type="InterPro" id="IPR050694">
    <property type="entry name" value="PRAME_domain"/>
</dbReference>
<dbReference type="PANTHER" id="PTHR14224:SF17">
    <property type="entry name" value="PRAME LIKE 14-RELATED"/>
    <property type="match status" value="1"/>
</dbReference>
<dbReference type="PANTHER" id="PTHR14224">
    <property type="entry name" value="SIMILAR TO PREFERENTIALLY EXPRESSED ANTIGEN IN MELANOMA-LIKE 3"/>
    <property type="match status" value="1"/>
</dbReference>
<dbReference type="PIRSF" id="PIRSF038286">
    <property type="entry name" value="PRAME"/>
    <property type="match status" value="1"/>
</dbReference>
<dbReference type="SUPFAM" id="SSF52047">
    <property type="entry name" value="RNI-like"/>
    <property type="match status" value="1"/>
</dbReference>
<protein>
    <recommendedName>
        <fullName evidence="7">Preferentially expressed antigen in melanoma-like protein 7</fullName>
        <shortName evidence="5">Prame-like 7</shortName>
    </recommendedName>
</protein>
<name>PRAL7_MOUSE</name>
<evidence type="ECO:0000250" key="1">
    <source>
        <dbReference type="UniProtKB" id="Q3UWY1"/>
    </source>
</evidence>
<evidence type="ECO:0000269" key="2">
    <source>
    </source>
</evidence>
<evidence type="ECO:0000269" key="3">
    <source>
    </source>
</evidence>
<evidence type="ECO:0000269" key="4">
    <source>
    </source>
</evidence>
<evidence type="ECO:0000305" key="5"/>
<evidence type="ECO:0000312" key="6">
    <source>
        <dbReference type="EMBL" id="AAH52825.1"/>
    </source>
</evidence>
<evidence type="ECO:0000312" key="7">
    <source>
        <dbReference type="MGI" id="MGI:2156391"/>
    </source>
</evidence>
<evidence type="ECO:0000312" key="8">
    <source>
        <dbReference type="Proteomes" id="UP000000589"/>
    </source>
</evidence>
<feature type="chain" id="PRO_0000440672" description="Preferentially expressed antigen in melanoma-like protein 7">
    <location>
        <begin position="1"/>
        <end position="479"/>
    </location>
</feature>
<feature type="repeat" description="LRR 1; degenerate" evidence="1">
    <location>
        <begin position="96"/>
        <end position="124"/>
    </location>
</feature>
<feature type="repeat" description="LRR 2; degenerate" evidence="1">
    <location>
        <begin position="179"/>
        <end position="203"/>
    </location>
</feature>
<feature type="repeat" description="LRR 3; degenerate" evidence="1">
    <location>
        <begin position="204"/>
        <end position="230"/>
    </location>
</feature>
<feature type="repeat" description="LRR 4; degenerate" evidence="1">
    <location>
        <begin position="231"/>
        <end position="265"/>
    </location>
</feature>
<feature type="repeat" description="LRR 5" evidence="1">
    <location>
        <begin position="266"/>
        <end position="291"/>
    </location>
</feature>
<feature type="repeat" description="LRR 6" evidence="1">
    <location>
        <begin position="292"/>
        <end position="323"/>
    </location>
</feature>
<feature type="repeat" description="LRR 7" evidence="1">
    <location>
        <begin position="324"/>
        <end position="347"/>
    </location>
</feature>
<feature type="repeat" description="LRR 8" evidence="1">
    <location>
        <begin position="348"/>
        <end position="375"/>
    </location>
</feature>
<feature type="repeat" description="LRR 9" evidence="1">
    <location>
        <begin position="376"/>
        <end position="400"/>
    </location>
</feature>
<feature type="sequence conflict" description="In Ref. 3; AAH52825." evidence="5" ref="3">
    <original>D</original>
    <variation>G</variation>
    <location>
        <position position="103"/>
    </location>
</feature>
<feature type="sequence conflict" description="In Ref. 3; AAH52825." evidence="5" ref="3">
    <original>L</original>
    <variation>P</variation>
    <location>
        <position position="370"/>
    </location>
</feature>
<sequence>MVSAPPTLQDQAFRSLVRNEVLTVSDAECLIREFFPPLFKEASTQKKPKTIMILVEHWPYPCLHVGLLIDKPNFQIFQAILDGVDTWLKRKYRPRMGRLKKVDFRDAQHHASLDMQDEREGRDYLVGTLPKKQIVEDHSRTRKERLKLFHDLSFMSSLHEDKHQTLLLEWAKERTSFLHLCCEKLEIGAVEVSKVRNVLKFLQPELIKELKLNTVGNLSKLAKFVPFIRKMRNLQKLMLVRTFGTRTFTQEEKQNISKIISLFCKLSCLRHLTIDDVYFLTDQMKELLRCLEAPLVSLKITLCQLSQSDLESFAQRWNYSQLKHLCLRGVTLTNLDVTPLRDFLKRVAANLQTLDLEDCRMDDSHFRTLLPALIKCTQLTSINLYDNDISEDVLENFLHRTTNLSQLTTEMYPAPSEVYNESNYVIVEIFIQICSELMNKLMEVRQANSVCFGSSSCYDCDNRYLYEDDGDVTLCLCQE</sequence>
<keyword id="KW-0433">Leucine-rich repeat</keyword>
<keyword id="KW-1185">Reference proteome</keyword>
<keyword id="KW-0677">Repeat</keyword>